<dbReference type="EC" id="5.3.4.1" evidence="1"/>
<dbReference type="EMBL" id="BC114004">
    <property type="protein sequence ID" value="AAI14005.1"/>
    <property type="molecule type" value="mRNA"/>
</dbReference>
<dbReference type="EMBL" id="BT026278">
    <property type="protein sequence ID" value="ABG81434.1"/>
    <property type="molecule type" value="mRNA"/>
</dbReference>
<dbReference type="EMBL" id="BT030490">
    <property type="protein sequence ID" value="ABQ12930.1"/>
    <property type="molecule type" value="mRNA"/>
</dbReference>
<dbReference type="RefSeq" id="NP_001039344.1">
    <property type="nucleotide sequence ID" value="NM_001045879.2"/>
</dbReference>
<dbReference type="SMR" id="Q29RV1"/>
<dbReference type="FunCoup" id="Q29RV1">
    <property type="interactions" value="1276"/>
</dbReference>
<dbReference type="IntAct" id="Q29RV1">
    <property type="interactions" value="2"/>
</dbReference>
<dbReference type="STRING" id="9913.ENSBTAP00000022782"/>
<dbReference type="PaxDb" id="9913-ENSBTAP00000022782"/>
<dbReference type="PeptideAtlas" id="Q29RV1"/>
<dbReference type="GeneID" id="415110"/>
<dbReference type="KEGG" id="bta:415110"/>
<dbReference type="CTD" id="9601"/>
<dbReference type="eggNOG" id="KOG0190">
    <property type="taxonomic scope" value="Eukaryota"/>
</dbReference>
<dbReference type="InParanoid" id="Q29RV1"/>
<dbReference type="OrthoDB" id="427280at2759"/>
<dbReference type="Proteomes" id="UP000009136">
    <property type="component" value="Unplaced"/>
</dbReference>
<dbReference type="GO" id="GO:0009986">
    <property type="term" value="C:cell surface"/>
    <property type="evidence" value="ECO:0000318"/>
    <property type="project" value="GO_Central"/>
</dbReference>
<dbReference type="GO" id="GO:0005783">
    <property type="term" value="C:endoplasmic reticulum"/>
    <property type="evidence" value="ECO:0000318"/>
    <property type="project" value="GO_Central"/>
</dbReference>
<dbReference type="GO" id="GO:0005788">
    <property type="term" value="C:endoplasmic reticulum lumen"/>
    <property type="evidence" value="ECO:0007669"/>
    <property type="project" value="UniProtKB-SubCell"/>
</dbReference>
<dbReference type="GO" id="GO:0042470">
    <property type="term" value="C:melanosome"/>
    <property type="evidence" value="ECO:0007669"/>
    <property type="project" value="UniProtKB-SubCell"/>
</dbReference>
<dbReference type="GO" id="GO:0003756">
    <property type="term" value="F:protein disulfide isomerase activity"/>
    <property type="evidence" value="ECO:0000318"/>
    <property type="project" value="GO_Central"/>
</dbReference>
<dbReference type="GO" id="GO:0006457">
    <property type="term" value="P:protein folding"/>
    <property type="evidence" value="ECO:0000318"/>
    <property type="project" value="GO_Central"/>
</dbReference>
<dbReference type="GO" id="GO:0034976">
    <property type="term" value="P:response to endoplasmic reticulum stress"/>
    <property type="evidence" value="ECO:0000318"/>
    <property type="project" value="GO_Central"/>
</dbReference>
<dbReference type="CDD" id="cd02961">
    <property type="entry name" value="PDI_a_family"/>
    <property type="match status" value="2"/>
</dbReference>
<dbReference type="CDD" id="cd02995">
    <property type="entry name" value="PDI_a_PDI_a'_C"/>
    <property type="match status" value="1"/>
</dbReference>
<dbReference type="CDD" id="cd03073">
    <property type="entry name" value="PDI_b'_ERp72_ERp57"/>
    <property type="match status" value="1"/>
</dbReference>
<dbReference type="CDD" id="cd03068">
    <property type="entry name" value="PDI_b_ERp72"/>
    <property type="match status" value="1"/>
</dbReference>
<dbReference type="FunFam" id="3.40.30.10:FF:000017">
    <property type="entry name" value="Protein disulfide-isomerase A4"/>
    <property type="match status" value="1"/>
</dbReference>
<dbReference type="FunFam" id="3.40.30.10:FF:000067">
    <property type="entry name" value="Protein disulfide-isomerase A4"/>
    <property type="match status" value="1"/>
</dbReference>
<dbReference type="FunFam" id="3.40.30.10:FF:000076">
    <property type="entry name" value="Protein disulfide-isomerase A4"/>
    <property type="match status" value="1"/>
</dbReference>
<dbReference type="FunFam" id="3.40.30.10:FF:000084">
    <property type="entry name" value="Protein disulfide-isomerase A4"/>
    <property type="match status" value="1"/>
</dbReference>
<dbReference type="FunFam" id="3.40.30.10:FF:000126">
    <property type="entry name" value="Protein disulfide-isomerase A4"/>
    <property type="match status" value="1"/>
</dbReference>
<dbReference type="Gene3D" id="3.40.30.10">
    <property type="entry name" value="Glutaredoxin"/>
    <property type="match status" value="5"/>
</dbReference>
<dbReference type="InterPro" id="IPR005788">
    <property type="entry name" value="PDI_thioredoxin-like_dom"/>
</dbReference>
<dbReference type="InterPro" id="IPR041866">
    <property type="entry name" value="PDIA4_PDI_b"/>
</dbReference>
<dbReference type="InterPro" id="IPR005792">
    <property type="entry name" value="Prot_disulphide_isomerase"/>
</dbReference>
<dbReference type="InterPro" id="IPR017068">
    <property type="entry name" value="Protein_diS-isomerase_A4"/>
</dbReference>
<dbReference type="InterPro" id="IPR036249">
    <property type="entry name" value="Thioredoxin-like_sf"/>
</dbReference>
<dbReference type="InterPro" id="IPR017937">
    <property type="entry name" value="Thioredoxin_CS"/>
</dbReference>
<dbReference type="InterPro" id="IPR013766">
    <property type="entry name" value="Thioredoxin_domain"/>
</dbReference>
<dbReference type="NCBIfam" id="TIGR01130">
    <property type="entry name" value="ER_PDI_fam"/>
    <property type="match status" value="1"/>
</dbReference>
<dbReference type="NCBIfam" id="TIGR01126">
    <property type="entry name" value="pdi_dom"/>
    <property type="match status" value="3"/>
</dbReference>
<dbReference type="PANTHER" id="PTHR18929">
    <property type="entry name" value="PROTEIN DISULFIDE ISOMERASE"/>
    <property type="match status" value="1"/>
</dbReference>
<dbReference type="PANTHER" id="PTHR18929:SF210">
    <property type="entry name" value="PROTEIN DISULFIDE-ISOMERASE A4"/>
    <property type="match status" value="1"/>
</dbReference>
<dbReference type="Pfam" id="PF00085">
    <property type="entry name" value="Thioredoxin"/>
    <property type="match status" value="3"/>
</dbReference>
<dbReference type="Pfam" id="PF13848">
    <property type="entry name" value="Thioredoxin_6"/>
    <property type="match status" value="1"/>
</dbReference>
<dbReference type="PIRSF" id="PIRSF036862">
    <property type="entry name" value="Disulphide_isom_A4"/>
    <property type="match status" value="1"/>
</dbReference>
<dbReference type="PRINTS" id="PR00421">
    <property type="entry name" value="THIOREDOXIN"/>
</dbReference>
<dbReference type="SUPFAM" id="SSF52833">
    <property type="entry name" value="Thioredoxin-like"/>
    <property type="match status" value="5"/>
</dbReference>
<dbReference type="PROSITE" id="PS00014">
    <property type="entry name" value="ER_TARGET"/>
    <property type="match status" value="1"/>
</dbReference>
<dbReference type="PROSITE" id="PS00194">
    <property type="entry name" value="THIOREDOXIN_1"/>
    <property type="match status" value="3"/>
</dbReference>
<dbReference type="PROSITE" id="PS51352">
    <property type="entry name" value="THIOREDOXIN_2"/>
    <property type="match status" value="3"/>
</dbReference>
<gene>
    <name type="primary">PDIA4</name>
</gene>
<accession>Q29RV1</accession>
<accession>A5D971</accession>
<accession>Q0V8E1</accession>
<sequence length="643" mass="72526">MRPRKAWMLVLLLALVQLLAVASAGAPDEDSTDKEDAIEEDEEEDEDDDDDDDDLEVKEENGVLILNDANFDNFVADKDTVLLEFYAPWCGHCKQFAPEYEKIAATLKENDPPIPVAKIDATSESALASRFDVSGYPTIKILKKGQEVDYEGSRTQEEIVAKVKEVSQPNWTPPPEVTLVLTKDNFDEVVNDADIILVEFYAPWCGHCKKLAPEYEKAAKELSKSSPPIPLAKVDAIAETDLAKRFDVSSYPTLKIFRKGKAFSYNGPREKYGIVDYMMEQSGPPSKQILALKQVQEFLKDGDDVIIIGVFKSESDPAYQLYQDAANSLREDYKFHHTFSTEIAKFLKVSLGKLVVMQPEKFQSKYEPKSYVMDIKDSTEAAAITEHVVKHTLPLVGHRKAADAKRYTRRPLVVVYYSVDFSFDYRAATQFWRNKVLEVAKDFPEYTFAVADEEDFATELKDLGLSESGEEVNAAILDEGGRRFAMEPDDFDADALRDFVTAFKKGKLKPVIKSQPVPKNNKGPVKVVVGKTFDSIVMDPKKDVLIEFYAPWCGHCKQLEPVYTSLGKKYKGHKNLVIAKMDATANDVTSDRYKVEGFPTIYFAPSGDKKKPIKFEDGNRDLEHLSKFIEEHATKLSRTKEEL</sequence>
<proteinExistence type="evidence at transcript level"/>
<name>PDIA4_BOVIN</name>
<reference key="1">
    <citation type="submission" date="2006-02" db="EMBL/GenBank/DDBJ databases">
        <authorList>
            <consortium name="NIH - Mammalian Gene Collection (MGC) project"/>
        </authorList>
    </citation>
    <scope>NUCLEOTIDE SEQUENCE [LARGE SCALE MRNA]</scope>
    <source>
        <strain>Hereford</strain>
        <tissue>Testis</tissue>
    </source>
</reference>
<reference key="2">
    <citation type="journal article" date="2005" name="BMC Genomics">
        <title>Characterization of 954 bovine full-CDS cDNA sequences.</title>
        <authorList>
            <person name="Harhay G.P."/>
            <person name="Sonstegard T.S."/>
            <person name="Keele J.W."/>
            <person name="Heaton M.P."/>
            <person name="Clawson M.L."/>
            <person name="Snelling W.M."/>
            <person name="Wiedmann R.T."/>
            <person name="Van Tassell C.P."/>
            <person name="Smith T.P.L."/>
        </authorList>
    </citation>
    <scope>NUCLEOTIDE SEQUENCE [LARGE SCALE MRNA] OF 1-478</scope>
</reference>
<protein>
    <recommendedName>
        <fullName>Protein disulfide-isomerase A4</fullName>
        <ecNumber evidence="1">5.3.4.1</ecNumber>
    </recommendedName>
</protein>
<feature type="signal peptide" evidence="3">
    <location>
        <begin position="1"/>
        <end position="20"/>
    </location>
</feature>
<feature type="chain" id="PRO_0000240338" description="Protein disulfide-isomerase A4">
    <location>
        <begin position="21"/>
        <end position="643"/>
    </location>
</feature>
<feature type="domain" description="Thioredoxin 1" evidence="4">
    <location>
        <begin position="21"/>
        <end position="168"/>
    </location>
</feature>
<feature type="domain" description="Thioredoxin 2" evidence="4">
    <location>
        <begin position="170"/>
        <end position="300"/>
    </location>
</feature>
<feature type="domain" description="Thioredoxin 3" evidence="4">
    <location>
        <begin position="503"/>
        <end position="634"/>
    </location>
</feature>
<feature type="region of interest" description="Disordered" evidence="6">
    <location>
        <begin position="24"/>
        <end position="54"/>
    </location>
</feature>
<feature type="short sequence motif" description="CXXC" evidence="1">
    <location>
        <begin position="90"/>
        <end position="93"/>
    </location>
</feature>
<feature type="short sequence motif" description="CXXC" evidence="1">
    <location>
        <begin position="553"/>
        <end position="556"/>
    </location>
</feature>
<feature type="short sequence motif" description="Prevents secretion from ER" evidence="5">
    <location>
        <begin position="640"/>
        <end position="643"/>
    </location>
</feature>
<feature type="compositionally biased region" description="Acidic residues" evidence="6">
    <location>
        <begin position="27"/>
        <end position="54"/>
    </location>
</feature>
<feature type="modified residue" description="N6-acetyllysine" evidence="2">
    <location>
        <position position="365"/>
    </location>
</feature>
<feature type="disulfide bond" description="Redox-active" evidence="1 4">
    <location>
        <begin position="90"/>
        <end position="93"/>
    </location>
</feature>
<feature type="disulfide bond" description="Redox-active" evidence="4">
    <location>
        <begin position="205"/>
        <end position="208"/>
    </location>
</feature>
<feature type="disulfide bond" description="Redox-active" evidence="1 4">
    <location>
        <begin position="553"/>
        <end position="556"/>
    </location>
</feature>
<feature type="sequence conflict" description="In Ref. 2; ABG81434." evidence="7" ref="2">
    <original>V</original>
    <variation>A</variation>
    <location>
        <position position="16"/>
    </location>
</feature>
<feature type="sequence conflict" description="In Ref. 2; ABG81434/ABQ12930." evidence="7" ref="2">
    <original>T</original>
    <variation>S</variation>
    <location>
        <position position="32"/>
    </location>
</feature>
<feature type="sequence conflict" description="In Ref. 2; ABG81434." evidence="7" ref="2">
    <original>V</original>
    <variation>I</variation>
    <location>
        <position position="415"/>
    </location>
</feature>
<keyword id="KW-0007">Acetylation</keyword>
<keyword id="KW-1015">Disulfide bond</keyword>
<keyword id="KW-0256">Endoplasmic reticulum</keyword>
<keyword id="KW-0413">Isomerase</keyword>
<keyword id="KW-0676">Redox-active center</keyword>
<keyword id="KW-1185">Reference proteome</keyword>
<keyword id="KW-0677">Repeat</keyword>
<keyword id="KW-0732">Signal</keyword>
<organism>
    <name type="scientific">Bos taurus</name>
    <name type="common">Bovine</name>
    <dbReference type="NCBI Taxonomy" id="9913"/>
    <lineage>
        <taxon>Eukaryota</taxon>
        <taxon>Metazoa</taxon>
        <taxon>Chordata</taxon>
        <taxon>Craniata</taxon>
        <taxon>Vertebrata</taxon>
        <taxon>Euteleostomi</taxon>
        <taxon>Mammalia</taxon>
        <taxon>Eutheria</taxon>
        <taxon>Laurasiatheria</taxon>
        <taxon>Artiodactyla</taxon>
        <taxon>Ruminantia</taxon>
        <taxon>Pecora</taxon>
        <taxon>Bovidae</taxon>
        <taxon>Bovinae</taxon>
        <taxon>Bos</taxon>
    </lineage>
</organism>
<comment type="catalytic activity">
    <reaction evidence="1">
        <text>Catalyzes the rearrangement of -S-S- bonds in proteins.</text>
        <dbReference type="EC" id="5.3.4.1"/>
    </reaction>
</comment>
<comment type="subunit">
    <text evidence="1">Part of a large chaperone multiprotein complex comprising DNAJB11, HSP90B1, HSPA5, HYOU, PDIA2, PDIA4, PDIA6, PPIB, SDF2L1, UGGT1 and very small amounts of ERP29, but not, or at very low levels, CALR nor CANX. Component of a complex containing at least CRELD2, MANF, MATN3 and PDIA4 (By similarity).</text>
</comment>
<comment type="subcellular location">
    <subcellularLocation>
        <location evidence="2">Endoplasmic reticulum lumen</location>
    </subcellularLocation>
    <subcellularLocation>
        <location evidence="2">Melanosome</location>
    </subcellularLocation>
</comment>
<comment type="similarity">
    <text evidence="7">Belongs to the protein disulfide isomerase family.</text>
</comment>
<evidence type="ECO:0000250" key="1">
    <source>
        <dbReference type="UniProtKB" id="P08003"/>
    </source>
</evidence>
<evidence type="ECO:0000250" key="2">
    <source>
        <dbReference type="UniProtKB" id="P13667"/>
    </source>
</evidence>
<evidence type="ECO:0000255" key="3"/>
<evidence type="ECO:0000255" key="4">
    <source>
        <dbReference type="PROSITE-ProRule" id="PRU00691"/>
    </source>
</evidence>
<evidence type="ECO:0000255" key="5">
    <source>
        <dbReference type="PROSITE-ProRule" id="PRU10138"/>
    </source>
</evidence>
<evidence type="ECO:0000256" key="6">
    <source>
        <dbReference type="SAM" id="MobiDB-lite"/>
    </source>
</evidence>
<evidence type="ECO:0000305" key="7"/>